<gene>
    <name type="ordered locus">Rv0495c</name>
    <name type="ORF">MTCY20G9.21c</name>
</gene>
<comment type="function">
    <text evidence="1">Essential for maintaining intracellular redox homeostasis (PubMed:38211498). Could help overcome various host-induced stress conditions, ensure bacterial survival within macrophages and modulate in vivo growth of M.tuberculosis for long-term disease persistence (PubMed:38211498).</text>
</comment>
<comment type="disruption phenotype">
    <text evidence="1">The deletion mutant exhibits a highly oxidized cytosolic environment, a slow-growing phenotype, altered colony morphology, membrane permeability and cell wall integrity (PubMed:38211498). Mutant is more sensitive to the oxidative, membrane and hypoxic stress conditions, and is hypersensitive to all first-line anti-tuberculosis drugs (PubMed:38211498). Deletion of the gene alters the host immune response and mutant demonstrates an enhanced ability to grow inside the host (PubMed:38211498). The mutant exhibits a hypervirulent phenotype in infected mice due to excessive activation of immune cells (innate and adaptive), leading to extensive tissue necrosis and disruption of the normal tissue architecture (PubMed:38211498).</text>
</comment>
<comment type="similarity">
    <text evidence="2">Belongs to the Rv0495c family.</text>
</comment>
<sequence length="296" mass="32992">MWRPAQGARWHVPAVLGYGGIPRRASWSNVESVANSRRRPVHPGQEVELDFAREWVEFYDPDNPEHLIAADLTWLLSRWACVFGTPACQGTVAGRPNDGCCSHGAFLSDDDDRTRLADAVHKLTDDDWQFRAKGLRRKGYLELDEHDGQPQHRTRKHKGACIFLNRPGFAGGAGCALHSKALKLGVPPLTMKPDVCWQLPIRRSQEWVTRPDGTEILKTTLTEYDRRGWGSGGADLHWYCTGDPAAHVGTKQVWQSLADELTELLGEKAYGELAAMCKRRSQLGLIAVHPATRAAQ</sequence>
<keyword id="KW-1185">Reference proteome</keyword>
<protein>
    <recommendedName>
        <fullName evidence="2">Probable redox regulatory protein Rv0495c</fullName>
    </recommendedName>
</protein>
<proteinExistence type="evidence at protein level"/>
<accession>P9WKU5</accession>
<accession>L0T3S8</accession>
<accession>P64713</accession>
<accession>Q11160</accession>
<evidence type="ECO:0000269" key="1">
    <source>
    </source>
</evidence>
<evidence type="ECO:0000305" key="2"/>
<name>RHRP_MYCTU</name>
<organism>
    <name type="scientific">Mycobacterium tuberculosis (strain ATCC 25618 / H37Rv)</name>
    <dbReference type="NCBI Taxonomy" id="83332"/>
    <lineage>
        <taxon>Bacteria</taxon>
        <taxon>Bacillati</taxon>
        <taxon>Actinomycetota</taxon>
        <taxon>Actinomycetes</taxon>
        <taxon>Mycobacteriales</taxon>
        <taxon>Mycobacteriaceae</taxon>
        <taxon>Mycobacterium</taxon>
        <taxon>Mycobacterium tuberculosis complex</taxon>
    </lineage>
</organism>
<dbReference type="EMBL" id="AL123456">
    <property type="protein sequence ID" value="CCP43230.1"/>
    <property type="molecule type" value="Genomic_DNA"/>
</dbReference>
<dbReference type="PIR" id="B70745">
    <property type="entry name" value="B70745"/>
</dbReference>
<dbReference type="RefSeq" id="NP_215009.1">
    <property type="nucleotide sequence ID" value="NC_000962.3"/>
</dbReference>
<dbReference type="RefSeq" id="WP_003898484.1">
    <property type="nucleotide sequence ID" value="NC_000962.3"/>
</dbReference>
<dbReference type="SMR" id="P9WKU5"/>
<dbReference type="STRING" id="83332.Rv0495c"/>
<dbReference type="PaxDb" id="83332-Rv0495c"/>
<dbReference type="DNASU" id="887198"/>
<dbReference type="GeneID" id="887198"/>
<dbReference type="KEGG" id="mtu:Rv0495c"/>
<dbReference type="KEGG" id="mtv:RVBD_0495c"/>
<dbReference type="PATRIC" id="fig|83332.111.peg.544"/>
<dbReference type="TubercuList" id="Rv0495c"/>
<dbReference type="eggNOG" id="ENOG502Z8QX">
    <property type="taxonomic scope" value="Bacteria"/>
</dbReference>
<dbReference type="InParanoid" id="P9WKU5"/>
<dbReference type="OrthoDB" id="3394274at2"/>
<dbReference type="PhylomeDB" id="P9WKU5"/>
<dbReference type="Proteomes" id="UP000001584">
    <property type="component" value="Chromosome"/>
</dbReference>
<reference key="1">
    <citation type="journal article" date="1998" name="Nature">
        <title>Deciphering the biology of Mycobacterium tuberculosis from the complete genome sequence.</title>
        <authorList>
            <person name="Cole S.T."/>
            <person name="Brosch R."/>
            <person name="Parkhill J."/>
            <person name="Garnier T."/>
            <person name="Churcher C.M."/>
            <person name="Harris D.E."/>
            <person name="Gordon S.V."/>
            <person name="Eiglmeier K."/>
            <person name="Gas S."/>
            <person name="Barry C.E. III"/>
            <person name="Tekaia F."/>
            <person name="Badcock K."/>
            <person name="Basham D."/>
            <person name="Brown D."/>
            <person name="Chillingworth T."/>
            <person name="Connor R."/>
            <person name="Davies R.M."/>
            <person name="Devlin K."/>
            <person name="Feltwell T."/>
            <person name="Gentles S."/>
            <person name="Hamlin N."/>
            <person name="Holroyd S."/>
            <person name="Hornsby T."/>
            <person name="Jagels K."/>
            <person name="Krogh A."/>
            <person name="McLean J."/>
            <person name="Moule S."/>
            <person name="Murphy L.D."/>
            <person name="Oliver S."/>
            <person name="Osborne J."/>
            <person name="Quail M.A."/>
            <person name="Rajandream M.A."/>
            <person name="Rogers J."/>
            <person name="Rutter S."/>
            <person name="Seeger K."/>
            <person name="Skelton S."/>
            <person name="Squares S."/>
            <person name="Squares R."/>
            <person name="Sulston J.E."/>
            <person name="Taylor K."/>
            <person name="Whitehead S."/>
            <person name="Barrell B.G."/>
        </authorList>
    </citation>
    <scope>NUCLEOTIDE SEQUENCE [LARGE SCALE GENOMIC DNA]</scope>
    <source>
        <strain>ATCC 25618 / H37Rv</strain>
    </source>
</reference>
<reference key="2">
    <citation type="journal article" date="2011" name="Mol. Cell. Proteomics">
        <title>Proteogenomic analysis of Mycobacterium tuberculosis by high resolution mass spectrometry.</title>
        <authorList>
            <person name="Kelkar D.S."/>
            <person name="Kumar D."/>
            <person name="Kumar P."/>
            <person name="Balakrishnan L."/>
            <person name="Muthusamy B."/>
            <person name="Yadav A.K."/>
            <person name="Shrivastava P."/>
            <person name="Marimuthu A."/>
            <person name="Anand S."/>
            <person name="Sundaram H."/>
            <person name="Kingsbury R."/>
            <person name="Harsha H.C."/>
            <person name="Nair B."/>
            <person name="Prasad T.S."/>
            <person name="Chauhan D.S."/>
            <person name="Katoch K."/>
            <person name="Katoch V.M."/>
            <person name="Kumar P."/>
            <person name="Chaerkady R."/>
            <person name="Ramachandran S."/>
            <person name="Dash D."/>
            <person name="Pandey A."/>
        </authorList>
    </citation>
    <scope>IDENTIFICATION BY MASS SPECTROMETRY [LARGE SCALE ANALYSIS]</scope>
    <source>
        <strain>ATCC 25618 / H37Rv</strain>
    </source>
</reference>
<reference key="3">
    <citation type="journal article" date="2024" name="Tuberculosis">
        <title>Rv0495c regulates redox homeostasis in Mycobacterium tuberculosis.</title>
        <authorList>
            <person name="Pal R."/>
            <person name="Talwar S."/>
            <person name="Pandey M."/>
            <person name="Nain V.K."/>
            <person name="Sharma T."/>
            <person name="Tyagi S."/>
            <person name="Barik V."/>
            <person name="Chaudhary S."/>
            <person name="Gupta S.K."/>
            <person name="Kumar Y."/>
            <person name="Nanda R."/>
            <person name="Singhal A."/>
            <person name="Pandey A.K."/>
        </authorList>
    </citation>
    <scope>FUNCTION</scope>
    <scope>DISRUPTION PHENOTYPE</scope>
    <source>
        <strain>H37Rv</strain>
    </source>
</reference>
<feature type="chain" id="PRO_0000103695" description="Probable redox regulatory protein Rv0495c">
    <location>
        <begin position="1"/>
        <end position="296"/>
    </location>
</feature>